<feature type="chain" id="PRO_0000068767" description="Zinc transporter ZIP2">
    <location>
        <begin position="1"/>
        <end position="309"/>
    </location>
</feature>
<feature type="topological domain" description="Extracellular">
    <location>
        <begin position="1"/>
        <end position="8"/>
    </location>
</feature>
<feature type="transmembrane region" description="Helical" evidence="2">
    <location>
        <begin position="9"/>
        <end position="29"/>
    </location>
</feature>
<feature type="topological domain" description="Cytoplasmic" evidence="2">
    <location>
        <begin position="30"/>
        <end position="46"/>
    </location>
</feature>
<feature type="transmembrane region" description="Helical" evidence="2">
    <location>
        <begin position="47"/>
        <end position="67"/>
    </location>
</feature>
<feature type="topological domain" description="Extracellular" evidence="2">
    <location>
        <begin position="68"/>
        <end position="103"/>
    </location>
</feature>
<feature type="transmembrane region" description="Helical" evidence="2">
    <location>
        <begin position="104"/>
        <end position="124"/>
    </location>
</feature>
<feature type="topological domain" description="Cytoplasmic" evidence="2">
    <location>
        <begin position="125"/>
        <end position="164"/>
    </location>
</feature>
<feature type="transmembrane region" description="Helical" evidence="2">
    <location>
        <begin position="165"/>
        <end position="185"/>
    </location>
</feature>
<feature type="topological domain" description="Extracellular" evidence="2">
    <location>
        <begin position="186"/>
        <end position="189"/>
    </location>
</feature>
<feature type="transmembrane region" description="Helical" evidence="2">
    <location>
        <begin position="190"/>
        <end position="210"/>
    </location>
</feature>
<feature type="topological domain" description="Cytoplasmic" evidence="2">
    <location>
        <begin position="211"/>
        <end position="224"/>
    </location>
</feature>
<feature type="transmembrane region" description="Helical" evidence="2">
    <location>
        <begin position="225"/>
        <end position="245"/>
    </location>
</feature>
<feature type="topological domain" description="Extracellular" evidence="2">
    <location>
        <begin position="246"/>
        <end position="258"/>
    </location>
</feature>
<feature type="transmembrane region" description="Helical" evidence="2">
    <location>
        <begin position="259"/>
        <end position="279"/>
    </location>
</feature>
<feature type="topological domain" description="Cytoplasmic" evidence="2">
    <location>
        <begin position="280"/>
        <end position="288"/>
    </location>
</feature>
<feature type="transmembrane region" description="Helical" evidence="2">
    <location>
        <begin position="289"/>
        <end position="309"/>
    </location>
</feature>
<feature type="binding site" evidence="9">
    <location>
        <position position="175"/>
    </location>
    <ligand>
        <name>Zn(2+)</name>
        <dbReference type="ChEBI" id="CHEBI:29105"/>
    </ligand>
</feature>
<feature type="binding site" evidence="9">
    <location>
        <position position="179"/>
    </location>
    <ligand>
        <name>Zn(2+)</name>
        <dbReference type="ChEBI" id="CHEBI:29105"/>
    </ligand>
</feature>
<feature type="binding site" evidence="9">
    <location>
        <position position="202"/>
    </location>
    <ligand>
        <name>Zn(2+)</name>
        <dbReference type="ChEBI" id="CHEBI:29105"/>
    </ligand>
</feature>
<feature type="binding site" evidence="9">
    <location>
        <position position="276"/>
    </location>
    <ligand>
        <name>Zn(2+)</name>
        <dbReference type="ChEBI" id="CHEBI:29105"/>
    </ligand>
</feature>
<feature type="site" description="Critical for the pH sensitivity" evidence="6">
    <location>
        <position position="63"/>
    </location>
</feature>
<feature type="splice variant" id="VSP_046889" description="In isoform 2." evidence="8">
    <original>NRS</original>
    <variation>ISK</variation>
    <location>
        <begin position="83"/>
        <end position="85"/>
    </location>
</feature>
<feature type="splice variant" id="VSP_046890" description="In isoform 2." evidence="8">
    <location>
        <begin position="86"/>
        <end position="309"/>
    </location>
</feature>
<feature type="sequence variant" id="VAR_057480" description="In dbSNP:rs2234633.">
    <original>L</original>
    <variation>P</variation>
    <location>
        <position position="48"/>
    </location>
</feature>
<feature type="sequence variant" id="VAR_020265" description="In dbSNP:rs2234634.">
    <original>M</original>
    <variation>V</variation>
    <location>
        <position position="80"/>
    </location>
</feature>
<feature type="sequence variant" id="VAR_055452" description="In dbSNP:rs2234636." evidence="3 4 7">
    <original>F</original>
    <variation>L</variation>
    <location>
        <position position="115"/>
    </location>
</feature>
<feature type="sequence variant" id="VAR_020266" description="In dbSNP:rs6413532.">
    <original>G</original>
    <variation>E</variation>
    <location>
        <position position="129"/>
    </location>
</feature>
<feature type="sequence variant" id="VAR_020267" description="In dbSNP:rs2234637.">
    <original>H</original>
    <variation>Y</variation>
    <location>
        <position position="154"/>
    </location>
</feature>
<feature type="mutagenesis site" description="Decreased of about 60% in transport activity. Loss of pH dependence for transport activity." evidence="6">
    <original>H</original>
    <variation>A</variation>
    <location>
        <position position="63"/>
    </location>
</feature>
<feature type="mutagenesis site" description="Decreased of about 35% in transport activity. Alters the pH and voltage modulation of the transporter." evidence="6">
    <original>E</original>
    <variation>A</variation>
    <location>
        <position position="67"/>
    </location>
</feature>
<feature type="mutagenesis site" description="Increased of about 65% in transport activity. Does not change H(+) affinity." evidence="6">
    <original>E</original>
    <variation>A</variation>
    <location>
        <position position="70"/>
    </location>
</feature>
<feature type="mutagenesis site" description="Does not affect pH sensitivity." evidence="6">
    <original>E</original>
    <variation>A</variation>
    <variation>Q</variation>
    <location>
        <position position="71"/>
    </location>
</feature>
<feature type="mutagenesis site" description="Decreased of about 30% in transport activity." evidence="6">
    <original>E</original>
    <variation>A</variation>
    <location>
        <position position="106"/>
    </location>
</feature>
<feature type="mutagenesis site" description="Increased of about 35% in transport activity." evidence="6">
    <original>E</original>
    <variation>Q</variation>
    <location>
        <position position="106"/>
    </location>
</feature>
<feature type="mutagenesis site" description="Does not affect pH sensitivity." evidence="6">
    <original>E</original>
    <variation>A</variation>
    <location>
        <position position="120"/>
    </location>
</feature>
<feature type="mutagenesis site" description="Abolishes transport activity." evidence="6">
    <original>H</original>
    <variation>A</variation>
    <location>
        <position position="175"/>
    </location>
</feature>
<feature type="mutagenesis site" description="Does not alter the substrate selectivity of SLC39A2." evidence="6">
    <original>S</original>
    <variation>A</variation>
    <location>
        <position position="176"/>
    </location>
</feature>
<feature type="mutagenesis site" description="Decreased of about 60% in transport activity. Does not alter the substrate selectivity of SLC39A2." evidence="6">
    <original>E</original>
    <variation>A</variation>
    <location>
        <position position="179"/>
    </location>
</feature>
<feature type="mutagenesis site" description="Abolishes transport activity." evidence="6">
    <original>E</original>
    <variation>Q</variation>
    <location>
        <position position="179"/>
    </location>
</feature>
<feature type="mutagenesis site" description="Abolishes transport activity." evidence="6">
    <original>H</original>
    <variation>A</variation>
    <location>
        <position position="202"/>
    </location>
</feature>
<feature type="mutagenesis site" description="Does not affect transport kinetics parameters. Exhibits a broader substrate selectivity.">
    <original>H</original>
    <variation>E</variation>
    <location>
        <position position="202"/>
    </location>
</feature>
<feature type="mutagenesis site" description="Decreased of about 78% in transport activity." evidence="6">
    <original>K</original>
    <variation>A</variation>
    <location>
        <position position="203"/>
    </location>
</feature>
<feature type="mutagenesis site" description="Abolishes transport activity." evidence="6">
    <original>K</original>
    <variation>Q</variation>
    <location>
        <position position="203"/>
    </location>
</feature>
<feature type="mutagenesis site" description="Decreases of about 72% in transport activity." evidence="6">
    <original>K</original>
    <variation>R</variation>
    <location>
        <position position="203"/>
    </location>
</feature>
<feature type="mutagenesis site" description="Exhibits a broader substrate selectivity." evidence="6">
    <original>F</original>
    <variation>A</variation>
    <location>
        <position position="269"/>
    </location>
</feature>
<feature type="mutagenesis site" description="Exhibits a broader substrate selectivity." evidence="6">
    <original>F</original>
    <variation>L</variation>
    <location>
        <position position="269"/>
    </location>
</feature>
<feature type="mutagenesis site" description="Abolishes transport activity." evidence="6">
    <original>E</original>
    <variation>A</variation>
    <location>
        <position position="276"/>
    </location>
</feature>
<feature type="mutagenesis site" description="Does not affect transport activity. Reduces affinity for H(+)." evidence="6">
    <original>E</original>
    <variation>Q</variation>
    <location>
        <position position="276"/>
    </location>
</feature>
<feature type="sequence conflict" description="In Ref. 5; AAH98254." evidence="8" ref="5">
    <original>L</original>
    <variation>P</variation>
    <location>
        <position position="12"/>
    </location>
</feature>
<feature type="sequence conflict" description="In Ref. 1; BAA94313, 2; AAF35832 and 5; AAH96723/AAH98254/AAI10058." evidence="8" ref="1 2 5">
    <original>L</original>
    <variation>R</variation>
    <location>
        <position position="43"/>
    </location>
</feature>
<feature type="sequence conflict" description="In Ref. 3; BAG37473." evidence="8" ref="3">
    <original>E</original>
    <variation>V</variation>
    <location>
        <position position="120"/>
    </location>
</feature>
<dbReference type="EMBL" id="D83039">
    <property type="protein sequence ID" value="BAA94313.1"/>
    <property type="molecule type" value="mRNA"/>
</dbReference>
<dbReference type="EMBL" id="AF186081">
    <property type="protein sequence ID" value="AAF35832.1"/>
    <property type="molecule type" value="mRNA"/>
</dbReference>
<dbReference type="EMBL" id="AK314974">
    <property type="protein sequence ID" value="BAG37473.1"/>
    <property type="molecule type" value="mRNA"/>
</dbReference>
<dbReference type="EMBL" id="AL161668">
    <property type="status" value="NOT_ANNOTATED_CDS"/>
    <property type="molecule type" value="Genomic_DNA"/>
</dbReference>
<dbReference type="EMBL" id="AL355922">
    <property type="status" value="NOT_ANNOTATED_CDS"/>
    <property type="molecule type" value="Genomic_DNA"/>
</dbReference>
<dbReference type="EMBL" id="BC096723">
    <property type="protein sequence ID" value="AAH96723.1"/>
    <property type="molecule type" value="mRNA"/>
</dbReference>
<dbReference type="EMBL" id="BC098254">
    <property type="protein sequence ID" value="AAH98254.1"/>
    <property type="molecule type" value="mRNA"/>
</dbReference>
<dbReference type="EMBL" id="BC110057">
    <property type="protein sequence ID" value="AAI10058.1"/>
    <property type="molecule type" value="mRNA"/>
</dbReference>
<dbReference type="EMBL" id="AY029483">
    <property type="protein sequence ID" value="AAK40258.1"/>
    <property type="molecule type" value="mRNA"/>
</dbReference>
<dbReference type="CCDS" id="CCDS58303.1">
    <molecule id="Q9NP94-2"/>
</dbReference>
<dbReference type="CCDS" id="CCDS9563.1">
    <molecule id="Q9NP94-1"/>
</dbReference>
<dbReference type="RefSeq" id="NP_001243517.1">
    <molecule id="Q9NP94-2"/>
    <property type="nucleotide sequence ID" value="NM_001256588.2"/>
</dbReference>
<dbReference type="RefSeq" id="NP_055394.2">
    <molecule id="Q9NP94-1"/>
    <property type="nucleotide sequence ID" value="NM_014579.4"/>
</dbReference>
<dbReference type="SMR" id="Q9NP94"/>
<dbReference type="BioGRID" id="119012">
    <property type="interactions" value="50"/>
</dbReference>
<dbReference type="FunCoup" id="Q9NP94">
    <property type="interactions" value="19"/>
</dbReference>
<dbReference type="IntAct" id="Q9NP94">
    <property type="interactions" value="51"/>
</dbReference>
<dbReference type="STRING" id="9606.ENSP00000298681"/>
<dbReference type="DrugBank" id="DB14533">
    <property type="generic name" value="Zinc chloride"/>
</dbReference>
<dbReference type="DrugBank" id="DB14548">
    <property type="generic name" value="Zinc sulfate, unspecified form"/>
</dbReference>
<dbReference type="TCDB" id="2.A.5.3.1">
    <property type="family name" value="the zinc (zn(2+))-iron (fe(2+)) permease (zip) family"/>
</dbReference>
<dbReference type="GlyGen" id="Q9NP94">
    <property type="glycosylation" value="1 site, 1 N-linked glycan (1 site)"/>
</dbReference>
<dbReference type="BioMuta" id="SLC39A2"/>
<dbReference type="DMDM" id="296452889"/>
<dbReference type="PaxDb" id="9606-ENSP00000298681"/>
<dbReference type="PeptideAtlas" id="Q9NP94"/>
<dbReference type="ProteomicsDB" id="33651"/>
<dbReference type="ProteomicsDB" id="81937">
    <molecule id="Q9NP94-1"/>
</dbReference>
<dbReference type="Antibodypedia" id="22081">
    <property type="antibodies" value="85 antibodies from 27 providers"/>
</dbReference>
<dbReference type="DNASU" id="29986"/>
<dbReference type="Ensembl" id="ENST00000298681.5">
    <molecule id="Q9NP94-1"/>
    <property type="protein sequence ID" value="ENSP00000298681.4"/>
    <property type="gene ID" value="ENSG00000165794.10"/>
</dbReference>
<dbReference type="Ensembl" id="ENST00000554422.5">
    <molecule id="Q9NP94-2"/>
    <property type="protein sequence ID" value="ENSP00000452568.1"/>
    <property type="gene ID" value="ENSG00000165794.10"/>
</dbReference>
<dbReference type="GeneID" id="29986"/>
<dbReference type="KEGG" id="hsa:29986"/>
<dbReference type="MANE-Select" id="ENST00000298681.5">
    <property type="protein sequence ID" value="ENSP00000298681.4"/>
    <property type="RefSeq nucleotide sequence ID" value="NM_014579.4"/>
    <property type="RefSeq protein sequence ID" value="NP_055394.2"/>
</dbReference>
<dbReference type="UCSC" id="uc001vyr.4">
    <molecule id="Q9NP94-1"/>
    <property type="organism name" value="human"/>
</dbReference>
<dbReference type="AGR" id="HGNC:17127"/>
<dbReference type="CTD" id="29986"/>
<dbReference type="DisGeNET" id="29986"/>
<dbReference type="GeneCards" id="SLC39A2"/>
<dbReference type="HGNC" id="HGNC:17127">
    <property type="gene designation" value="SLC39A2"/>
</dbReference>
<dbReference type="HPA" id="ENSG00000165794">
    <property type="expression patterns" value="Tissue enhanced (esophagus, seminal vesicle, skin)"/>
</dbReference>
<dbReference type="MIM" id="612166">
    <property type="type" value="gene"/>
</dbReference>
<dbReference type="neXtProt" id="NX_Q9NP94"/>
<dbReference type="OpenTargets" id="ENSG00000165794"/>
<dbReference type="PharmGKB" id="PA38202"/>
<dbReference type="VEuPathDB" id="HostDB:ENSG00000165794"/>
<dbReference type="eggNOG" id="KOG1558">
    <property type="taxonomic scope" value="Eukaryota"/>
</dbReference>
<dbReference type="GeneTree" id="ENSGT00940000160962"/>
<dbReference type="HOGENOM" id="CLU_2512017_0_0_1"/>
<dbReference type="InParanoid" id="Q9NP94"/>
<dbReference type="OMA" id="EEWGGTH"/>
<dbReference type="OrthoDB" id="448280at2759"/>
<dbReference type="PAN-GO" id="Q9NP94">
    <property type="GO annotations" value="3 GO annotations based on evolutionary models"/>
</dbReference>
<dbReference type="PhylomeDB" id="Q9NP94"/>
<dbReference type="TreeFam" id="TF317098"/>
<dbReference type="PathwayCommons" id="Q9NP94"/>
<dbReference type="Reactome" id="R-HSA-442380">
    <property type="pathway name" value="Zinc influx into cells by the SLC39 gene family"/>
</dbReference>
<dbReference type="SignaLink" id="Q9NP94"/>
<dbReference type="BioGRID-ORCS" id="29986">
    <property type="hits" value="14 hits in 1143 CRISPR screens"/>
</dbReference>
<dbReference type="GeneWiki" id="SLC39A2"/>
<dbReference type="GenomeRNAi" id="29986"/>
<dbReference type="Pharos" id="Q9NP94">
    <property type="development level" value="Tbio"/>
</dbReference>
<dbReference type="PRO" id="PR:Q9NP94"/>
<dbReference type="Proteomes" id="UP000005640">
    <property type="component" value="Chromosome 14"/>
</dbReference>
<dbReference type="RNAct" id="Q9NP94">
    <property type="molecule type" value="protein"/>
</dbReference>
<dbReference type="Bgee" id="ENSG00000165794">
    <property type="expression patterns" value="Expressed in tongue squamous epithelium and 104 other cell types or tissues"/>
</dbReference>
<dbReference type="GO" id="GO:0036464">
    <property type="term" value="C:cytoplasmic ribonucleoprotein granule"/>
    <property type="evidence" value="ECO:0000314"/>
    <property type="project" value="HPA"/>
</dbReference>
<dbReference type="GO" id="GO:0031410">
    <property type="term" value="C:cytoplasmic vesicle"/>
    <property type="evidence" value="ECO:0000314"/>
    <property type="project" value="UniProtKB"/>
</dbReference>
<dbReference type="GO" id="GO:0005886">
    <property type="term" value="C:plasma membrane"/>
    <property type="evidence" value="ECO:0000314"/>
    <property type="project" value="HPA"/>
</dbReference>
<dbReference type="GO" id="GO:0046873">
    <property type="term" value="F:metal ion transmembrane transporter activity"/>
    <property type="evidence" value="ECO:0000314"/>
    <property type="project" value="UniProtKB"/>
</dbReference>
<dbReference type="GO" id="GO:0005385">
    <property type="term" value="F:zinc ion transmembrane transporter activity"/>
    <property type="evidence" value="ECO:0000314"/>
    <property type="project" value="UniProtKB"/>
</dbReference>
<dbReference type="GO" id="GO:0070574">
    <property type="term" value="P:cadmium ion transmembrane transport"/>
    <property type="evidence" value="ECO:0000314"/>
    <property type="project" value="UniProtKB"/>
</dbReference>
<dbReference type="GO" id="GO:0030216">
    <property type="term" value="P:keratinocyte differentiation"/>
    <property type="evidence" value="ECO:0007669"/>
    <property type="project" value="Ensembl"/>
</dbReference>
<dbReference type="GO" id="GO:0071577">
    <property type="term" value="P:zinc ion transmembrane transport"/>
    <property type="evidence" value="ECO:0000314"/>
    <property type="project" value="UniProtKB"/>
</dbReference>
<dbReference type="GO" id="GO:0006829">
    <property type="term" value="P:zinc ion transport"/>
    <property type="evidence" value="ECO:0000304"/>
    <property type="project" value="ProtInc"/>
</dbReference>
<dbReference type="InterPro" id="IPR003689">
    <property type="entry name" value="ZIP"/>
</dbReference>
<dbReference type="PANTHER" id="PTHR11040:SF120">
    <property type="entry name" value="ZINC TRANSPORTER ZIP2"/>
    <property type="match status" value="1"/>
</dbReference>
<dbReference type="PANTHER" id="PTHR11040">
    <property type="entry name" value="ZINC/IRON TRANSPORTER"/>
    <property type="match status" value="1"/>
</dbReference>
<dbReference type="Pfam" id="PF02535">
    <property type="entry name" value="Zip"/>
    <property type="match status" value="1"/>
</dbReference>
<comment type="function">
    <text evidence="1 3 5 6">Transporter for the divalent cation Zn(2+) (PubMed:10681536, PubMed:29791142, PubMed:30914478). Mediates the influx of Zn(2+) into cells from extracellular space. The Zn(2+) uniporter activity is independent of H(+)-driving force, but is modulated by extracellular pH and membrane potential. Also transports other divalent cations Zn(2+), Cd2(+), Cu2(+), Co2(+) in the order of decreasing affinity, respectively (PubMed:29791142, PubMed:30914478). In the skin, aids in the differentiation of keratinocytes in the epidermis (By similarity).</text>
</comment>
<comment type="catalytic activity">
    <reaction evidence="3 5 6">
        <text>Zn(2+)(in) = Zn(2+)(out)</text>
        <dbReference type="Rhea" id="RHEA:29351"/>
        <dbReference type="ChEBI" id="CHEBI:29105"/>
    </reaction>
    <physiologicalReaction direction="right-to-left" evidence="9">
        <dbReference type="Rhea" id="RHEA:29353"/>
    </physiologicalReaction>
</comment>
<comment type="catalytic activity">
    <reaction evidence="6">
        <text>Cd(2+)(in) = Cd(2+)(out)</text>
        <dbReference type="Rhea" id="RHEA:28707"/>
        <dbReference type="ChEBI" id="CHEBI:48775"/>
    </reaction>
</comment>
<comment type="activity regulation">
    <text evidence="5 6">Activity is increased at acidic pH (6.5) (PubMed:29791142). Inhibited in the presence of high extracellular K(+) (PubMed:29791142, PubMed:30914478).</text>
</comment>
<comment type="biophysicochemical properties">
    <kinetics>
        <KM evidence="3">3 uM for Zn(2+)</KM>
        <KM evidence="5">1.6 uM for Cd2(+)</KM>
        <KM evidence="6">1.46 uM for Cd2(+)</KM>
    </kinetics>
    <phDependence>
        <text evidence="5">Transport activity is maximal at acidic pH (&lt;6.0) and almost negligible at pH &gt;7.5.</text>
    </phDependence>
</comment>
<comment type="interaction">
    <interactant intactId="EBI-12898013">
        <id>Q9NP94</id>
    </interactant>
    <interactant intactId="EBI-745213">
        <id>P29972</id>
        <label>AQP1</label>
    </interactant>
    <organismsDiffer>false</organismsDiffer>
    <experiments>3</experiments>
</comment>
<comment type="interaction">
    <interactant intactId="EBI-12898013">
        <id>Q9NP94</id>
    </interactant>
    <interactant intactId="EBI-13059134">
        <id>Q13520</id>
        <label>AQP6</label>
    </interactant>
    <organismsDiffer>false</organismsDiffer>
    <experiments>3</experiments>
</comment>
<comment type="interaction">
    <interactant intactId="EBI-12898013">
        <id>Q9NP94</id>
    </interactant>
    <interactant intactId="EBI-11343438">
        <id>Q3SXY8</id>
        <label>ARL13B</label>
    </interactant>
    <organismsDiffer>false</organismsDiffer>
    <experiments>3</experiments>
</comment>
<comment type="interaction">
    <interactant intactId="EBI-12898013">
        <id>Q9NP94</id>
    </interactant>
    <interactant intactId="EBI-707714">
        <id>Q92843</id>
        <label>BCL2L2</label>
    </interactant>
    <organismsDiffer>false</organismsDiffer>
    <experiments>3</experiments>
</comment>
<comment type="interaction">
    <interactant intactId="EBI-12898013">
        <id>Q9NP94</id>
    </interactant>
    <interactant intactId="EBI-8648738">
        <id>Q8WVV5</id>
        <label>BTN2A2</label>
    </interactant>
    <organismsDiffer>false</organismsDiffer>
    <experiments>3</experiments>
</comment>
<comment type="interaction">
    <interactant intactId="EBI-12898013">
        <id>Q9NP94</id>
    </interactant>
    <interactant intactId="EBI-12003442">
        <id>Q8WVX3-2</id>
        <label>C4orf3</label>
    </interactant>
    <organismsDiffer>false</organismsDiffer>
    <experiments>3</experiments>
</comment>
<comment type="interaction">
    <interactant intactId="EBI-12898013">
        <id>Q9NP94</id>
    </interactant>
    <interactant intactId="EBI-7797864">
        <id>P11912</id>
        <label>CD79A</label>
    </interactant>
    <organismsDiffer>false</organismsDiffer>
    <experiments>3</experiments>
</comment>
<comment type="interaction">
    <interactant intactId="EBI-12898013">
        <id>Q9NP94</id>
    </interactant>
    <interactant intactId="EBI-2835940">
        <id>P34972</id>
        <label>CNR2</label>
    </interactant>
    <organismsDiffer>false</organismsDiffer>
    <experiments>3</experiments>
</comment>
<comment type="interaction">
    <interactant intactId="EBI-12898013">
        <id>Q9NP94</id>
    </interactant>
    <interactant intactId="EBI-12211159">
        <id>P29400-2</id>
        <label>COL4A5</label>
    </interactant>
    <organismsDiffer>false</organismsDiffer>
    <experiments>3</experiments>
</comment>
<comment type="interaction">
    <interactant intactId="EBI-12898013">
        <id>Q9NP94</id>
    </interactant>
    <interactant intactId="EBI-372265">
        <id>P21964</id>
        <label>COMT</label>
    </interactant>
    <organismsDiffer>false</organismsDiffer>
    <experiments>3</experiments>
</comment>
<comment type="interaction">
    <interactant intactId="EBI-12898013">
        <id>Q9NP94</id>
    </interactant>
    <interactant intactId="EBI-6942903">
        <id>Q96BA8</id>
        <label>CREB3L1</label>
    </interactant>
    <organismsDiffer>false</organismsDiffer>
    <experiments>3</experiments>
</comment>
<comment type="interaction">
    <interactant intactId="EBI-12898013">
        <id>Q9NP94</id>
    </interactant>
    <interactant intactId="EBI-2835281">
        <id>P25025</id>
        <label>CXCR2</label>
    </interactant>
    <organismsDiffer>false</organismsDiffer>
    <experiments>3</experiments>
</comment>
<comment type="interaction">
    <interactant intactId="EBI-12898013">
        <id>Q9NP94</id>
    </interactant>
    <interactant intactId="EBI-8646596">
        <id>P49447</id>
        <label>CYB561</label>
    </interactant>
    <organismsDiffer>false</organismsDiffer>
    <experiments>3</experiments>
</comment>
<comment type="interaction">
    <interactant intactId="EBI-12898013">
        <id>Q9NP94</id>
    </interactant>
    <interactant intactId="EBI-2339219">
        <id>Q08426</id>
        <label>EHHADH</label>
    </interactant>
    <organismsDiffer>false</organismsDiffer>
    <experiments>3</experiments>
</comment>
<comment type="interaction">
    <interactant intactId="EBI-12898013">
        <id>Q9NP94</id>
    </interactant>
    <interactant intactId="EBI-2820492">
        <id>Q9BV81</id>
        <label>EMC6</label>
    </interactant>
    <organismsDiffer>false</organismsDiffer>
    <experiments>3</experiments>
</comment>
<comment type="interaction">
    <interactant intactId="EBI-12898013">
        <id>Q9NP94</id>
    </interactant>
    <interactant intactId="EBI-2876774">
        <id>Q92520</id>
        <label>FAM3C</label>
    </interactant>
    <organismsDiffer>false</organismsDiffer>
    <experiments>3</experiments>
</comment>
<comment type="interaction">
    <interactant intactId="EBI-12898013">
        <id>Q9NP94</id>
    </interactant>
    <interactant intactId="EBI-12175685">
        <id>Q14802-3</id>
        <label>FXYD3</label>
    </interactant>
    <organismsDiffer>false</organismsDiffer>
    <experiments>3</experiments>
</comment>
<comment type="interaction">
    <interactant intactId="EBI-12898013">
        <id>Q9NP94</id>
    </interactant>
    <interactant intactId="EBI-713304">
        <id>Q9H0Q3</id>
        <label>FXYD6</label>
    </interactant>
    <organismsDiffer>false</organismsDiffer>
    <experiments>3</experiments>
</comment>
<comment type="interaction">
    <interactant intactId="EBI-12898013">
        <id>Q9NP94</id>
    </interactant>
    <interactant intactId="EBI-746917">
        <id>O75084</id>
        <label>FZD7</label>
    </interactant>
    <organismsDiffer>false</organismsDiffer>
    <experiments>3</experiments>
</comment>
<comment type="interaction">
    <interactant intactId="EBI-12898013">
        <id>Q9NP94</id>
    </interactant>
    <interactant intactId="EBI-17458373">
        <id>P48165</id>
        <label>GJA8</label>
    </interactant>
    <organismsDiffer>false</organismsDiffer>
    <experiments>3</experiments>
</comment>
<comment type="interaction">
    <interactant intactId="EBI-12898013">
        <id>Q9NP94</id>
    </interactant>
    <interactant intactId="EBI-13345167">
        <id>Q8TDT2</id>
        <label>GPR152</label>
    </interactant>
    <organismsDiffer>false</organismsDiffer>
    <experiments>3</experiments>
</comment>
<comment type="interaction">
    <interactant intactId="EBI-12898013">
        <id>Q9NP94</id>
    </interactant>
    <interactant intactId="EBI-18076404">
        <id>O15529</id>
        <label>GPR42</label>
    </interactant>
    <organismsDiffer>false</organismsDiffer>
    <experiments>3</experiments>
</comment>
<comment type="interaction">
    <interactant intactId="EBI-12898013">
        <id>Q9NP94</id>
    </interactant>
    <interactant intactId="EBI-9088345">
        <id>O95867</id>
        <label>LY6G6C</label>
    </interactant>
    <organismsDiffer>false</organismsDiffer>
    <experiments>3</experiments>
</comment>
<comment type="interaction">
    <interactant intactId="EBI-12898013">
        <id>Q9NP94</id>
    </interactant>
    <interactant intactId="EBI-2858252">
        <id>Q6ZSS7</id>
        <label>MFSD6</label>
    </interactant>
    <organismsDiffer>false</organismsDiffer>
    <experiments>3</experiments>
</comment>
<comment type="interaction">
    <interactant intactId="EBI-12898013">
        <id>Q9NP94</id>
    </interactant>
    <interactant intactId="EBI-12070086">
        <id>Q5J8X5</id>
        <label>MS4A13</label>
    </interactant>
    <organismsDiffer>false</organismsDiffer>
    <experiments>3</experiments>
</comment>
<comment type="interaction">
    <interactant intactId="EBI-12898013">
        <id>Q9NP94</id>
    </interactant>
    <interactant intactId="EBI-10262547">
        <id>Q8IXM6</id>
        <label>NRM</label>
    </interactant>
    <organismsDiffer>false</organismsDiffer>
    <experiments>3</experiments>
</comment>
<comment type="interaction">
    <interactant intactId="EBI-12898013">
        <id>Q9NP94</id>
    </interactant>
    <interactant intactId="EBI-692836">
        <id>P26678</id>
        <label>PLN</label>
    </interactant>
    <organismsDiffer>false</organismsDiffer>
    <experiments>3</experiments>
</comment>
<comment type="interaction">
    <interactant intactId="EBI-12898013">
        <id>Q9NP94</id>
    </interactant>
    <interactant intactId="EBI-8652812">
        <id>P54315</id>
        <label>PNLIPRP1</label>
    </interactant>
    <organismsDiffer>false</organismsDiffer>
    <experiments>3</experiments>
</comment>
<comment type="interaction">
    <interactant intactId="EBI-12898013">
        <id>Q9NP94</id>
    </interactant>
    <interactant intactId="EBI-8652744">
        <id>Q96IW7</id>
        <label>SEC22A</label>
    </interactant>
    <organismsDiffer>false</organismsDiffer>
    <experiments>3</experiments>
</comment>
<comment type="interaction">
    <interactant intactId="EBI-12898013">
        <id>Q9NP94</id>
    </interactant>
    <interactant intactId="EBI-17595455">
        <id>P54219-3</id>
        <label>SLC18A1</label>
    </interactant>
    <organismsDiffer>false</organismsDiffer>
    <experiments>3</experiments>
</comment>
<comment type="interaction">
    <interactant intactId="EBI-12898013">
        <id>Q9NP94</id>
    </interactant>
    <interactant intactId="EBI-8644112">
        <id>Q9BRI3</id>
        <label>SLC30A2</label>
    </interactant>
    <organismsDiffer>false</organismsDiffer>
    <experiments>3</experiments>
</comment>
<comment type="interaction">
    <interactant intactId="EBI-12898013">
        <id>Q9NP94</id>
    </interactant>
    <interactant intactId="EBI-10262251">
        <id>Q8IWU4</id>
        <label>SLC30A8</label>
    </interactant>
    <organismsDiffer>false</organismsDiffer>
    <experiments>3</experiments>
</comment>
<comment type="interaction">
    <interactant intactId="EBI-12898013">
        <id>Q9NP94</id>
    </interactant>
    <interactant intactId="EBI-2823239">
        <id>Q9NUM3</id>
        <label>SLC39A9</label>
    </interactant>
    <organismsDiffer>false</organismsDiffer>
    <experiments>3</experiments>
</comment>
<comment type="interaction">
    <interactant intactId="EBI-12898013">
        <id>Q9NP94</id>
    </interactant>
    <interactant intactId="EBI-12889586">
        <id>Q6ZP29-3</id>
        <label>SLC66A1</label>
    </interactant>
    <organismsDiffer>false</organismsDiffer>
    <experiments>3</experiments>
</comment>
<comment type="interaction">
    <interactant intactId="EBI-12898013">
        <id>Q9NP94</id>
    </interactant>
    <interactant intactId="EBI-4289564">
        <id>P30825</id>
        <label>SLC7A1</label>
    </interactant>
    <organismsDiffer>false</organismsDiffer>
    <experiments>3</experiments>
</comment>
<comment type="interaction">
    <interactant intactId="EBI-12898013">
        <id>Q9NP94</id>
    </interactant>
    <interactant intactId="EBI-17280858">
        <id>Q8WWF3</id>
        <label>SSMEM1</label>
    </interactant>
    <organismsDiffer>false</organismsDiffer>
    <experiments>3</experiments>
</comment>
<comment type="interaction">
    <interactant intactId="EBI-12898013">
        <id>Q9NP94</id>
    </interactant>
    <interactant intactId="EBI-12908338">
        <id>Q96JF0-2</id>
        <label>ST6GAL2</label>
    </interactant>
    <organismsDiffer>false</organismsDiffer>
    <experiments>3</experiments>
</comment>
<comment type="interaction">
    <interactant intactId="EBI-12898013">
        <id>Q9NP94</id>
    </interactant>
    <interactant intactId="EBI-738687">
        <id>P02808</id>
        <label>STATH</label>
    </interactant>
    <organismsDiffer>false</organismsDiffer>
    <experiments>3</experiments>
</comment>
<comment type="interaction">
    <interactant intactId="EBI-12898013">
        <id>Q9NP94</id>
    </interactant>
    <interactant intactId="EBI-12845616">
        <id>Q6UX40</id>
        <label>TMEM107</label>
    </interactant>
    <organismsDiffer>false</organismsDiffer>
    <experiments>3</experiments>
</comment>
<comment type="interaction">
    <interactant intactId="EBI-12898013">
        <id>Q9NP94</id>
    </interactant>
    <interactant intactId="EBI-8638294">
        <id>Q9NUH8</id>
        <label>TMEM14B</label>
    </interactant>
    <organismsDiffer>false</organismsDiffer>
    <experiments>3</experiments>
</comment>
<comment type="interaction">
    <interactant intactId="EBI-12898013">
        <id>Q9NP94</id>
    </interactant>
    <interactant intactId="EBI-12195227">
        <id>Q8NBD8</id>
        <label>TMEM229B</label>
    </interactant>
    <organismsDiffer>false</organismsDiffer>
    <experiments>3</experiments>
</comment>
<comment type="interaction">
    <interactant intactId="EBI-12898013">
        <id>Q9NP94</id>
    </interactant>
    <interactant intactId="EBI-10982110">
        <id>Q96Q45-2</id>
        <label>TMEM237</label>
    </interactant>
    <organismsDiffer>false</organismsDiffer>
    <experiments>3</experiments>
</comment>
<comment type="interaction">
    <interactant intactId="EBI-12898013">
        <id>Q9NP94</id>
    </interactant>
    <interactant intactId="EBI-3922833">
        <id>Q969K7</id>
        <label>TMEM54</label>
    </interactant>
    <organismsDiffer>false</organismsDiffer>
    <experiments>3</experiments>
</comment>
<comment type="interaction">
    <interactant intactId="EBI-12898013">
        <id>Q9NP94</id>
    </interactant>
    <interactant intactId="EBI-2852148">
        <id>Q9H2L4</id>
        <label>TMEM60</label>
    </interactant>
    <organismsDiffer>false</organismsDiffer>
    <experiments>3</experiments>
</comment>
<comment type="interaction">
    <interactant intactId="EBI-12898013">
        <id>Q9NP94</id>
    </interactant>
    <interactant intactId="EBI-12015604">
        <id>Q8N2M4</id>
        <label>TMEM86A</label>
    </interactant>
    <organismsDiffer>false</organismsDiffer>
    <experiments>3</experiments>
</comment>
<comment type="interaction">
    <interactant intactId="EBI-12898013">
        <id>Q9NP94</id>
    </interactant>
    <interactant intactId="EBI-18055230">
        <id>P34981</id>
        <label>TRHR</label>
    </interactant>
    <organismsDiffer>false</organismsDiffer>
    <experiments>3</experiments>
</comment>
<comment type="interaction">
    <interactant intactId="EBI-12898013">
        <id>Q9NP94</id>
    </interactant>
    <interactant intactId="EBI-10243654">
        <id>Q5BVD1</id>
        <label>TTMP</label>
    </interactant>
    <organismsDiffer>false</organismsDiffer>
    <experiments>3</experiments>
</comment>
<comment type="interaction">
    <interactant intactId="EBI-12898013">
        <id>Q9NP94</id>
    </interactant>
    <interactant intactId="EBI-988826">
        <id>Q9Y385</id>
        <label>UBE2J1</label>
    </interactant>
    <organismsDiffer>false</organismsDiffer>
    <experiments>3</experiments>
</comment>
<comment type="interaction">
    <interactant intactId="EBI-12898013">
        <id>Q9NP94</id>
    </interactant>
    <interactant intactId="EBI-12237619">
        <id>O75841</id>
        <label>UPK1B</label>
    </interactant>
    <organismsDiffer>false</organismsDiffer>
    <experiments>3</experiments>
</comment>
<comment type="interaction">
    <interactant intactId="EBI-12898013">
        <id>Q9NP94</id>
    </interactant>
    <interactant intactId="EBI-10191195">
        <id>O95183</id>
        <label>VAMP5</label>
    </interactant>
    <organismsDiffer>false</organismsDiffer>
    <experiments>3</experiments>
</comment>
<comment type="interaction">
    <interactant intactId="EBI-12898013">
        <id>Q9NP94</id>
    </interactant>
    <interactant intactId="EBI-751210">
        <id>Q96EC8</id>
        <label>YIPF6</label>
    </interactant>
    <organismsDiffer>false</organismsDiffer>
    <experiments>3</experiments>
</comment>
<comment type="subcellular location">
    <subcellularLocation>
        <location evidence="3 6">Cell membrane</location>
        <topology evidence="2">Multi-pass membrane protein</topology>
    </subcellularLocation>
</comment>
<comment type="alternative products">
    <event type="alternative splicing"/>
    <isoform>
        <id>Q9NP94-1</id>
        <name>1</name>
        <sequence type="displayed"/>
    </isoform>
    <isoform>
        <id>Q9NP94-2</id>
        <name>2</name>
        <sequence type="described" ref="VSP_046889 VSP_046890"/>
    </isoform>
</comment>
<comment type="tissue specificity">
    <text evidence="3">Expressed only in prostate and uterine epithelial cells.</text>
</comment>
<comment type="induction">
    <text>Shows a dramatic induction in normal epithelial cells contact inhibition.</text>
</comment>
<comment type="similarity">
    <text evidence="8">Belongs to the ZIP transporter (TC 2.A.5) family.</text>
</comment>
<comment type="caution">
    <text evidence="3 5 6">It was previously proposed that SLC39A2 operates as a Zn2(+)/HCO3(-) symport mechanism (PubMed:10681536). However in more recent studies, SLC39A2-mediated transport is independent of both HCO3(-) and H(+)-driving forces, but modulated by extracellular pH and voltage (PubMed:29791142, PubMed:30914478).</text>
</comment>
<sequence length="309" mass="32742">MEQLLGIKLGCLFALLALTLGCGLTPICFKWFQIDAARGHHRLVLRLLGCISAGVFLGAGFMHMTAEALEEIESQIQKFMVQNRSASERNSSGDADSAHMEYPYGELIISLGFFFVFFLESLALQCCPGAAGGSTVQDEEWGGAHIFELHSHGHLPSPSKGPLRALVLLLSLSFHSVFEGLAVGLQPTVAATVQLCLAVLAHKGLVVFGVGMRLVHLGTSSRWAVFSILLLALMSPLGLAVGLAVTGGDSEGGRGLAQAVLEGVAAGTFLYVTFLEILPRELASPEAPLAKWSCVAAGFAFMAFIALWA</sequence>
<accession>Q9NP94</accession>
<accession>B2RC76</accession>
<accession>G3V5X2</accession>
<accession>Q4QQJ1</accession>
<accession>Q4V9S4</accession>
<accession>Q96JT6</accession>
<accession>Q9UD20</accession>
<keyword id="KW-0025">Alternative splicing</keyword>
<keyword id="KW-1003">Cell membrane</keyword>
<keyword id="KW-0406">Ion transport</keyword>
<keyword id="KW-0472">Membrane</keyword>
<keyword id="KW-1267">Proteomics identification</keyword>
<keyword id="KW-1185">Reference proteome</keyword>
<keyword id="KW-0812">Transmembrane</keyword>
<keyword id="KW-1133">Transmembrane helix</keyword>
<keyword id="KW-0813">Transport</keyword>
<keyword id="KW-0862">Zinc</keyword>
<keyword id="KW-0864">Zinc transport</keyword>
<name>S39A2_HUMAN</name>
<evidence type="ECO:0000250" key="1">
    <source>
        <dbReference type="UniProtKB" id="G3X943"/>
    </source>
</evidence>
<evidence type="ECO:0000255" key="2"/>
<evidence type="ECO:0000269" key="3">
    <source>
    </source>
</evidence>
<evidence type="ECO:0000269" key="4">
    <source>
    </source>
</evidence>
<evidence type="ECO:0000269" key="5">
    <source>
    </source>
</evidence>
<evidence type="ECO:0000269" key="6">
    <source>
    </source>
</evidence>
<evidence type="ECO:0000269" key="7">
    <source>
    </source>
</evidence>
<evidence type="ECO:0000305" key="8"/>
<evidence type="ECO:0000305" key="9">
    <source>
    </source>
</evidence>
<evidence type="ECO:0000312" key="10">
    <source>
        <dbReference type="HGNC" id="HGNC:17127"/>
    </source>
</evidence>
<proteinExistence type="evidence at protein level"/>
<gene>
    <name evidence="10" type="primary">SLC39A2</name>
    <name type="synonym">ZIP2</name>
</gene>
<protein>
    <recommendedName>
        <fullName>Zinc transporter ZIP2</fullName>
    </recommendedName>
    <alternativeName>
        <fullName>6A1</fullName>
    </alternativeName>
    <alternativeName>
        <fullName>Eti-1</fullName>
    </alternativeName>
    <alternativeName>
        <fullName>Solute carrier family 39 member 2</fullName>
    </alternativeName>
    <alternativeName>
        <fullName>Zrt- and Irt-like protein 2</fullName>
        <shortName>ZIP-2</shortName>
        <shortName>hZIP2</shortName>
    </alternativeName>
</protein>
<organism>
    <name type="scientific">Homo sapiens</name>
    <name type="common">Human</name>
    <dbReference type="NCBI Taxonomy" id="9606"/>
    <lineage>
        <taxon>Eukaryota</taxon>
        <taxon>Metazoa</taxon>
        <taxon>Chordata</taxon>
        <taxon>Craniata</taxon>
        <taxon>Vertebrata</taxon>
        <taxon>Euteleostomi</taxon>
        <taxon>Mammalia</taxon>
        <taxon>Eutheria</taxon>
        <taxon>Euarchontoglires</taxon>
        <taxon>Primates</taxon>
        <taxon>Haplorrhini</taxon>
        <taxon>Catarrhini</taxon>
        <taxon>Hominidae</taxon>
        <taxon>Homo</taxon>
    </lineage>
</organism>
<reference key="1">
    <citation type="journal article" date="1995" name="Kokubyo Gakkai Zasshi">
        <title>Subtraction cloning of growth arrest inducible genes in normal human epithelial cells.</title>
        <authorList>
            <person name="Yamaguchi S."/>
        </authorList>
    </citation>
    <scope>NUCLEOTIDE SEQUENCE [MRNA] (ISOFORM 1)</scope>
    <scope>VARIANT LEU-115</scope>
    <source>
        <tissue>Uterine ectocervix</tissue>
    </source>
</reference>
<reference key="2">
    <citation type="journal article" date="2000" name="J. Biol. Chem.">
        <title>Functional expression of the human hZIP2 zinc transporter.</title>
        <authorList>
            <person name="Gaither L.A."/>
            <person name="Eide D.J."/>
        </authorList>
    </citation>
    <scope>NUCLEOTIDE SEQUENCE [MRNA] (ISOFORM 1)</scope>
    <scope>FUNCTION</scope>
    <scope>VARIANT LEU-115</scope>
    <scope>TISSUE SPECIFICITY</scope>
    <scope>BIOPHYSICOCHEMICAL PROPERTIES</scope>
    <scope>SUBCELLULAR LOCATION</scope>
    <source>
        <tissue>Prostate</tissue>
    </source>
</reference>
<reference key="3">
    <citation type="journal article" date="2004" name="Nat. Genet.">
        <title>Complete sequencing and characterization of 21,243 full-length human cDNAs.</title>
        <authorList>
            <person name="Ota T."/>
            <person name="Suzuki Y."/>
            <person name="Nishikawa T."/>
            <person name="Otsuki T."/>
            <person name="Sugiyama T."/>
            <person name="Irie R."/>
            <person name="Wakamatsu A."/>
            <person name="Hayashi K."/>
            <person name="Sato H."/>
            <person name="Nagai K."/>
            <person name="Kimura K."/>
            <person name="Makita H."/>
            <person name="Sekine M."/>
            <person name="Obayashi M."/>
            <person name="Nishi T."/>
            <person name="Shibahara T."/>
            <person name="Tanaka T."/>
            <person name="Ishii S."/>
            <person name="Yamamoto J."/>
            <person name="Saito K."/>
            <person name="Kawai Y."/>
            <person name="Isono Y."/>
            <person name="Nakamura Y."/>
            <person name="Nagahari K."/>
            <person name="Murakami K."/>
            <person name="Yasuda T."/>
            <person name="Iwayanagi T."/>
            <person name="Wagatsuma M."/>
            <person name="Shiratori A."/>
            <person name="Sudo H."/>
            <person name="Hosoiri T."/>
            <person name="Kaku Y."/>
            <person name="Kodaira H."/>
            <person name="Kondo H."/>
            <person name="Sugawara M."/>
            <person name="Takahashi M."/>
            <person name="Kanda K."/>
            <person name="Yokoi T."/>
            <person name="Furuya T."/>
            <person name="Kikkawa E."/>
            <person name="Omura Y."/>
            <person name="Abe K."/>
            <person name="Kamihara K."/>
            <person name="Katsuta N."/>
            <person name="Sato K."/>
            <person name="Tanikawa M."/>
            <person name="Yamazaki M."/>
            <person name="Ninomiya K."/>
            <person name="Ishibashi T."/>
            <person name="Yamashita H."/>
            <person name="Murakawa K."/>
            <person name="Fujimori K."/>
            <person name="Tanai H."/>
            <person name="Kimata M."/>
            <person name="Watanabe M."/>
            <person name="Hiraoka S."/>
            <person name="Chiba Y."/>
            <person name="Ishida S."/>
            <person name="Ono Y."/>
            <person name="Takiguchi S."/>
            <person name="Watanabe S."/>
            <person name="Yosida M."/>
            <person name="Hotuta T."/>
            <person name="Kusano J."/>
            <person name="Kanehori K."/>
            <person name="Takahashi-Fujii A."/>
            <person name="Hara H."/>
            <person name="Tanase T.-O."/>
            <person name="Nomura Y."/>
            <person name="Togiya S."/>
            <person name="Komai F."/>
            <person name="Hara R."/>
            <person name="Takeuchi K."/>
            <person name="Arita M."/>
            <person name="Imose N."/>
            <person name="Musashino K."/>
            <person name="Yuuki H."/>
            <person name="Oshima A."/>
            <person name="Sasaki N."/>
            <person name="Aotsuka S."/>
            <person name="Yoshikawa Y."/>
            <person name="Matsunawa H."/>
            <person name="Ichihara T."/>
            <person name="Shiohata N."/>
            <person name="Sano S."/>
            <person name="Moriya S."/>
            <person name="Momiyama H."/>
            <person name="Satoh N."/>
            <person name="Takami S."/>
            <person name="Terashima Y."/>
            <person name="Suzuki O."/>
            <person name="Nakagawa S."/>
            <person name="Senoh A."/>
            <person name="Mizoguchi H."/>
            <person name="Goto Y."/>
            <person name="Shimizu F."/>
            <person name="Wakebe H."/>
            <person name="Hishigaki H."/>
            <person name="Watanabe T."/>
            <person name="Sugiyama A."/>
            <person name="Takemoto M."/>
            <person name="Kawakami B."/>
            <person name="Yamazaki M."/>
            <person name="Watanabe K."/>
            <person name="Kumagai A."/>
            <person name="Itakura S."/>
            <person name="Fukuzumi Y."/>
            <person name="Fujimori Y."/>
            <person name="Komiyama M."/>
            <person name="Tashiro H."/>
            <person name="Tanigami A."/>
            <person name="Fujiwara T."/>
            <person name="Ono T."/>
            <person name="Yamada K."/>
            <person name="Fujii Y."/>
            <person name="Ozaki K."/>
            <person name="Hirao M."/>
            <person name="Ohmori Y."/>
            <person name="Kawabata A."/>
            <person name="Hikiji T."/>
            <person name="Kobatake N."/>
            <person name="Inagaki H."/>
            <person name="Ikema Y."/>
            <person name="Okamoto S."/>
            <person name="Okitani R."/>
            <person name="Kawakami T."/>
            <person name="Noguchi S."/>
            <person name="Itoh T."/>
            <person name="Shigeta K."/>
            <person name="Senba T."/>
            <person name="Matsumura K."/>
            <person name="Nakajima Y."/>
            <person name="Mizuno T."/>
            <person name="Morinaga M."/>
            <person name="Sasaki M."/>
            <person name="Togashi T."/>
            <person name="Oyama M."/>
            <person name="Hata H."/>
            <person name="Watanabe M."/>
            <person name="Komatsu T."/>
            <person name="Mizushima-Sugano J."/>
            <person name="Satoh T."/>
            <person name="Shirai Y."/>
            <person name="Takahashi Y."/>
            <person name="Nakagawa K."/>
            <person name="Okumura K."/>
            <person name="Nagase T."/>
            <person name="Nomura N."/>
            <person name="Kikuchi H."/>
            <person name="Masuho Y."/>
            <person name="Yamashita R."/>
            <person name="Nakai K."/>
            <person name="Yada T."/>
            <person name="Nakamura Y."/>
            <person name="Ohara O."/>
            <person name="Isogai T."/>
            <person name="Sugano S."/>
        </authorList>
    </citation>
    <scope>NUCLEOTIDE SEQUENCE [LARGE SCALE MRNA] (ISOFORM 1)</scope>
    <source>
        <tissue>Prostate</tissue>
    </source>
</reference>
<reference key="4">
    <citation type="journal article" date="2003" name="Nature">
        <title>The DNA sequence and analysis of human chromosome 14.</title>
        <authorList>
            <person name="Heilig R."/>
            <person name="Eckenberg R."/>
            <person name="Petit J.-L."/>
            <person name="Fonknechten N."/>
            <person name="Da Silva C."/>
            <person name="Cattolico L."/>
            <person name="Levy M."/>
            <person name="Barbe V."/>
            <person name="De Berardinis V."/>
            <person name="Ureta-Vidal A."/>
            <person name="Pelletier E."/>
            <person name="Vico V."/>
            <person name="Anthouard V."/>
            <person name="Rowen L."/>
            <person name="Madan A."/>
            <person name="Qin S."/>
            <person name="Sun H."/>
            <person name="Du H."/>
            <person name="Pepin K."/>
            <person name="Artiguenave F."/>
            <person name="Robert C."/>
            <person name="Cruaud C."/>
            <person name="Bruels T."/>
            <person name="Jaillon O."/>
            <person name="Friedlander L."/>
            <person name="Samson G."/>
            <person name="Brottier P."/>
            <person name="Cure S."/>
            <person name="Segurens B."/>
            <person name="Aniere F."/>
            <person name="Samain S."/>
            <person name="Crespeau H."/>
            <person name="Abbasi N."/>
            <person name="Aiach N."/>
            <person name="Boscus D."/>
            <person name="Dickhoff R."/>
            <person name="Dors M."/>
            <person name="Dubois I."/>
            <person name="Friedman C."/>
            <person name="Gouyvenoux M."/>
            <person name="James R."/>
            <person name="Madan A."/>
            <person name="Mairey-Estrada B."/>
            <person name="Mangenot S."/>
            <person name="Martins N."/>
            <person name="Menard M."/>
            <person name="Oztas S."/>
            <person name="Ratcliffe A."/>
            <person name="Shaffer T."/>
            <person name="Trask B."/>
            <person name="Vacherie B."/>
            <person name="Bellemere C."/>
            <person name="Belser C."/>
            <person name="Besnard-Gonnet M."/>
            <person name="Bartol-Mavel D."/>
            <person name="Boutard M."/>
            <person name="Briez-Silla S."/>
            <person name="Combette S."/>
            <person name="Dufosse-Laurent V."/>
            <person name="Ferron C."/>
            <person name="Lechaplais C."/>
            <person name="Louesse C."/>
            <person name="Muselet D."/>
            <person name="Magdelenat G."/>
            <person name="Pateau E."/>
            <person name="Petit E."/>
            <person name="Sirvain-Trukniewicz P."/>
            <person name="Trybou A."/>
            <person name="Vega-Czarny N."/>
            <person name="Bataille E."/>
            <person name="Bluet E."/>
            <person name="Bordelais I."/>
            <person name="Dubois M."/>
            <person name="Dumont C."/>
            <person name="Guerin T."/>
            <person name="Haffray S."/>
            <person name="Hammadi R."/>
            <person name="Muanga J."/>
            <person name="Pellouin V."/>
            <person name="Robert D."/>
            <person name="Wunderle E."/>
            <person name="Gauguet G."/>
            <person name="Roy A."/>
            <person name="Sainte-Marthe L."/>
            <person name="Verdier J."/>
            <person name="Verdier-Discala C."/>
            <person name="Hillier L.W."/>
            <person name="Fulton L."/>
            <person name="McPherson J."/>
            <person name="Matsuda F."/>
            <person name="Wilson R."/>
            <person name="Scarpelli C."/>
            <person name="Gyapay G."/>
            <person name="Wincker P."/>
            <person name="Saurin W."/>
            <person name="Quetier F."/>
            <person name="Waterston R."/>
            <person name="Hood L."/>
            <person name="Weissenbach J."/>
        </authorList>
    </citation>
    <scope>NUCLEOTIDE SEQUENCE [LARGE SCALE GENOMIC DNA]</scope>
</reference>
<reference key="5">
    <citation type="journal article" date="2004" name="Genome Res.">
        <title>The status, quality, and expansion of the NIH full-length cDNA project: the Mammalian Gene Collection (MGC).</title>
        <authorList>
            <consortium name="The MGC Project Team"/>
        </authorList>
    </citation>
    <scope>NUCLEOTIDE SEQUENCE [LARGE SCALE MRNA] (ISOFORM 1)</scope>
    <scope>VARIANT LEU-115</scope>
</reference>
<reference key="6">
    <citation type="submission" date="2001-04" db="EMBL/GenBank/DDBJ databases">
        <title>Expression of zinc transporters in human prostate.</title>
        <authorList>
            <person name="Nong G."/>
            <person name="Buszko M.L."/>
            <person name="Sweeney C.A."/>
            <person name="Furman J."/>
            <person name="Rice L.P."/>
        </authorList>
    </citation>
    <scope>NUCLEOTIDE SEQUENCE [MRNA] OF 183-242 (ISOFORM 1)</scope>
    <source>
        <tissue>Prostate</tissue>
    </source>
</reference>
<reference key="7">
    <citation type="journal article" date="2018" name="Biochemistry">
        <title>Reassessment of the Transport Mechanism of the Human Zinc Transporter SLC39A2.</title>
        <authorList>
            <person name="Franz M.C."/>
            <person name="Pujol-Gimenez J."/>
            <person name="Montalbetti N."/>
            <person name="Fernandez-Tenorio M."/>
            <person name="DeGrado T.R."/>
            <person name="Niggli E."/>
            <person name="Romero M.F."/>
            <person name="Hediger M.A."/>
        </authorList>
    </citation>
    <scope>FUNCTION</scope>
    <scope>CATALYTIC ACTIVITY</scope>
    <scope>ACTIVITY REGULATION</scope>
    <scope>BIOPHYSICOCHEMICAL PROPERTIES</scope>
    <scope>SUBSTRATE SPECIFICITY</scope>
</reference>
<reference key="8">
    <citation type="journal article" date="2019" name="J. Biol. Chem.">
        <title>Unraveling the structural elements of pH sensitivity and substrate binding in the human zinc transporter SLC39A2 (ZIP2).</title>
        <authorList>
            <person name="Gyimesi G."/>
            <person name="Albano G."/>
            <person name="Fuster D.G."/>
            <person name="Hediger M.A."/>
            <person name="Pujol-Gimenez J."/>
        </authorList>
    </citation>
    <scope>FUNCTION</scope>
    <scope>TRANSPORTER ACTIVITY</scope>
    <scope>BIOPHYSICOCHEMICAL PROPERTIES</scope>
    <scope>SUBCELLULAR LOCATION</scope>
    <scope>SUBSTRATE SPECIFICITY</scope>
    <scope>MUTAGENESIS OF HIS-63; GLU-67; GLU-70; GLU-71; GLU-106; GLU-120; HIS-175; SER-176; GLU-179; HIS-202; LYS-203; PHE-269 AND GLU-276</scope>
</reference>